<organism>
    <name type="scientific">Brugia malayi</name>
    <name type="common">Filarial nematode worm</name>
    <dbReference type="NCBI Taxonomy" id="6279"/>
    <lineage>
        <taxon>Eukaryota</taxon>
        <taxon>Metazoa</taxon>
        <taxon>Ecdysozoa</taxon>
        <taxon>Nematoda</taxon>
        <taxon>Chromadorea</taxon>
        <taxon>Rhabditida</taxon>
        <taxon>Spirurina</taxon>
        <taxon>Spiruromorpha</taxon>
        <taxon>Filarioidea</taxon>
        <taxon>Onchocercidae</taxon>
        <taxon>Brugia</taxon>
    </lineage>
</organism>
<accession>P90703</accession>
<keyword id="KW-0597">Phosphoprotein</keyword>
<keyword id="KW-1185">Reference proteome</keyword>
<keyword id="KW-0687">Ribonucleoprotein</keyword>
<keyword id="KW-0689">Ribosomal protein</keyword>
<sequence>MMKYLAAYLLSTMSGNKSPSAKDIEDVLGSVGLDVDMEDANKVVSALSGKSIDEVITAGLAKVSSVPSDAAVSAIAPVVSATPTDALQAGSKKGETKEGPKEESDEDMGFGLFD</sequence>
<reference key="1">
    <citation type="journal article" date="1997" name="Mol. Biochem. Parasitol.">
        <title>Differentially expressed, abundant trans-spliced cDNAs from larval Brugia malayi.</title>
        <authorList>
            <person name="Gregory W.F."/>
            <person name="Blaxter M.L."/>
            <person name="Maizels R.M."/>
        </authorList>
    </citation>
    <scope>NUCLEOTIDE SEQUENCE [MRNA]</scope>
</reference>
<proteinExistence type="inferred from homology"/>
<comment type="function">
    <text>Plays an important role in the elongation step of protein synthesis.</text>
</comment>
<comment type="subunit">
    <text evidence="1">P1 and P2 exist as dimers at the large ribosomal subunit.</text>
</comment>
<comment type="PTM">
    <text evidence="1">Phosphorylated.</text>
</comment>
<comment type="similarity">
    <text evidence="3">Belongs to the eukaryotic ribosomal protein P1/P2 family.</text>
</comment>
<protein>
    <recommendedName>
        <fullName evidence="3">Large ribosomal subunit protein P2</fullName>
    </recommendedName>
    <alternativeName>
        <fullName>60S acidic ribosomal protein P2</fullName>
    </alternativeName>
</protein>
<evidence type="ECO:0000250" key="1"/>
<evidence type="ECO:0000256" key="2">
    <source>
        <dbReference type="SAM" id="MobiDB-lite"/>
    </source>
</evidence>
<evidence type="ECO:0000305" key="3"/>
<gene>
    <name type="primary">rpp-2</name>
</gene>
<name>RLA2_BRUMA</name>
<dbReference type="EMBL" id="U80977">
    <property type="protein sequence ID" value="AAC47628.1"/>
    <property type="molecule type" value="mRNA"/>
</dbReference>
<dbReference type="SMR" id="P90703"/>
<dbReference type="FunCoup" id="P90703">
    <property type="interactions" value="1010"/>
</dbReference>
<dbReference type="STRING" id="6279.P90703"/>
<dbReference type="InParanoid" id="P90703"/>
<dbReference type="Proteomes" id="UP000006672">
    <property type="component" value="Unassembled WGS sequence"/>
</dbReference>
<dbReference type="GO" id="GO:0022625">
    <property type="term" value="C:cytosolic large ribosomal subunit"/>
    <property type="evidence" value="ECO:0007669"/>
    <property type="project" value="InterPro"/>
</dbReference>
<dbReference type="GO" id="GO:0003735">
    <property type="term" value="F:structural constituent of ribosome"/>
    <property type="evidence" value="ECO:0007669"/>
    <property type="project" value="InterPro"/>
</dbReference>
<dbReference type="GO" id="GO:0002182">
    <property type="term" value="P:cytoplasmic translational elongation"/>
    <property type="evidence" value="ECO:0007669"/>
    <property type="project" value="InterPro"/>
</dbReference>
<dbReference type="CDD" id="cd05833">
    <property type="entry name" value="Ribosomal_P2"/>
    <property type="match status" value="1"/>
</dbReference>
<dbReference type="FunFam" id="1.10.10.1410:FF:000002">
    <property type="entry name" value="60S acidic ribosomal protein P2"/>
    <property type="match status" value="1"/>
</dbReference>
<dbReference type="Gene3D" id="1.10.10.1410">
    <property type="match status" value="1"/>
</dbReference>
<dbReference type="HAMAP" id="MF_01478">
    <property type="entry name" value="Ribosomal_L12_arch"/>
    <property type="match status" value="1"/>
</dbReference>
<dbReference type="InterPro" id="IPR038716">
    <property type="entry name" value="P1/P2_N_sf"/>
</dbReference>
<dbReference type="InterPro" id="IPR027534">
    <property type="entry name" value="Ribosomal_P1/P2"/>
</dbReference>
<dbReference type="InterPro" id="IPR044076">
    <property type="entry name" value="Ribosomal_P2"/>
</dbReference>
<dbReference type="PANTHER" id="PTHR21141">
    <property type="entry name" value="60S ACIDIC RIBOSOMAL PROTEIN FAMILY MEMBER"/>
    <property type="match status" value="1"/>
</dbReference>
<dbReference type="PANTHER" id="PTHR21141:SF5">
    <property type="entry name" value="LARGE RIBOSOMAL SUBUNIT PROTEIN P2"/>
    <property type="match status" value="1"/>
</dbReference>
<dbReference type="Pfam" id="PF00428">
    <property type="entry name" value="Ribosomal_60s"/>
    <property type="match status" value="1"/>
</dbReference>
<feature type="chain" id="PRO_0000157648" description="Large ribosomal subunit protein P2">
    <location>
        <begin position="1"/>
        <end position="114"/>
    </location>
</feature>
<feature type="region of interest" description="Disordered" evidence="2">
    <location>
        <begin position="84"/>
        <end position="114"/>
    </location>
</feature>
<feature type="compositionally biased region" description="Basic and acidic residues" evidence="2">
    <location>
        <begin position="92"/>
        <end position="102"/>
    </location>
</feature>